<protein>
    <recommendedName>
        <fullName>Putative uncharacterized protein DDB_G0274405</fullName>
    </recommendedName>
</protein>
<evidence type="ECO:0000256" key="1">
    <source>
        <dbReference type="SAM" id="MobiDB-lite"/>
    </source>
</evidence>
<evidence type="ECO:0000305" key="2"/>
<comment type="sequence caution" evidence="2">
    <conflict type="erroneous gene model prediction">
        <sequence resource="EMBL-CDS" id="EAL70094"/>
    </conflict>
</comment>
<comment type="sequence caution" evidence="2">
    <conflict type="erroneous gene model prediction">
        <sequence resource="EMBL-CDS" id="EAL70095"/>
    </conflict>
</comment>
<gene>
    <name type="ORF">DDB_G0274405</name>
</gene>
<keyword id="KW-1185">Reference proteome</keyword>
<sequence length="377" mass="44038">MDLSDLVQLYSDGIPQPTITPPTQNKDELNKNNNNKNKIIRHKGGNKNNRNNKNNVDNNNNNNNNNNNNEKQNQTNVNNEKITNTETLEIKKNNNNNNNNNNNNNNNNNNNNNNKNKYNKFNDNNNKKNKRNNDDDDDKEEMKRIKLFNQRLKEIKIQESPEDIARYLEERRRRYPSKANIEAKKKEEEDARKRGELLYNNNNNSKKKQTPDKKKKLENQTSKNNNKSSTTKTELTNTTTNTSSTTNPTTDTTTTTTNVVSIQKENENQEKENNDNDNDNEPIEVPSTLEFNKFEEKPIKEVKVNTASSNKRNKKRNNPKKVKEEPQVNKFQDSLFTKLFERDISAENNIILQCFRHFANKINQINGNDKLDEKKEI</sequence>
<dbReference type="EMBL" id="AAFI02000012">
    <property type="protein sequence ID" value="EAL70095.1"/>
    <property type="status" value="ALT_SEQ"/>
    <property type="molecule type" value="Genomic_DNA"/>
</dbReference>
<dbReference type="EMBL" id="AAFI02000012">
    <property type="protein sequence ID" value="EAL70094.1"/>
    <property type="status" value="ALT_SEQ"/>
    <property type="molecule type" value="Genomic_DNA"/>
</dbReference>
<dbReference type="RefSeq" id="XP_644222.1">
    <property type="nucleotide sequence ID" value="XM_639130.1"/>
</dbReference>
<dbReference type="RefSeq" id="XP_644223.1">
    <property type="nucleotide sequence ID" value="XM_639131.1"/>
</dbReference>
<dbReference type="FunCoup" id="Q86KA2">
    <property type="interactions" value="477"/>
</dbReference>
<dbReference type="GlyGen" id="Q86KA2">
    <property type="glycosylation" value="1 site"/>
</dbReference>
<dbReference type="PaxDb" id="44689-DDB0167609"/>
<dbReference type="EnsemblProtists" id="EAL70094">
    <property type="protein sequence ID" value="EAL70094"/>
    <property type="gene ID" value="DDB_G0274403"/>
</dbReference>
<dbReference type="EnsemblProtists" id="EAL70095">
    <property type="protein sequence ID" value="EAL70095"/>
    <property type="gene ID" value="DDB_G0274405"/>
</dbReference>
<dbReference type="GeneID" id="8619651"/>
<dbReference type="KEGG" id="ddi:DDB_G0274403"/>
<dbReference type="KEGG" id="ddi:DDB_G0274405"/>
<dbReference type="dictyBase" id="DDB_G0274405"/>
<dbReference type="VEuPathDB" id="AmoebaDB:DDB_G0274405"/>
<dbReference type="eggNOG" id="ENOG502RHW9">
    <property type="taxonomic scope" value="Eukaryota"/>
</dbReference>
<dbReference type="InParanoid" id="Q86KA2"/>
<dbReference type="PRO" id="PR:Q86KA2"/>
<dbReference type="Proteomes" id="UP000002195">
    <property type="component" value="Chromosome 2"/>
</dbReference>
<dbReference type="GO" id="GO:0005634">
    <property type="term" value="C:nucleus"/>
    <property type="evidence" value="ECO:0000318"/>
    <property type="project" value="GO_Central"/>
</dbReference>
<dbReference type="GO" id="GO:0003723">
    <property type="term" value="F:RNA binding"/>
    <property type="evidence" value="ECO:0007669"/>
    <property type="project" value="InterPro"/>
</dbReference>
<dbReference type="GO" id="GO:0000492">
    <property type="term" value="P:box C/D snoRNP assembly"/>
    <property type="evidence" value="ECO:0000318"/>
    <property type="project" value="GO_Central"/>
</dbReference>
<dbReference type="InterPro" id="IPR039136">
    <property type="entry name" value="NUFIP1-like"/>
</dbReference>
<dbReference type="InterPro" id="IPR019496">
    <property type="entry name" value="NUFIP1_cons_dom"/>
</dbReference>
<dbReference type="PANTHER" id="PTHR13309:SF0">
    <property type="entry name" value="FMR1-INTERACTING PROTEIN NUFIP1"/>
    <property type="match status" value="1"/>
</dbReference>
<dbReference type="PANTHER" id="PTHR13309">
    <property type="entry name" value="NUCLEAR FRAGILE X MENTAL RETARDATION PROTEIN INTERACTING PROTEIN 1"/>
    <property type="match status" value="1"/>
</dbReference>
<dbReference type="Pfam" id="PF10453">
    <property type="entry name" value="NUFIP1"/>
    <property type="match status" value="1"/>
</dbReference>
<organism>
    <name type="scientific">Dictyostelium discoideum</name>
    <name type="common">Social amoeba</name>
    <dbReference type="NCBI Taxonomy" id="44689"/>
    <lineage>
        <taxon>Eukaryota</taxon>
        <taxon>Amoebozoa</taxon>
        <taxon>Evosea</taxon>
        <taxon>Eumycetozoa</taxon>
        <taxon>Dictyostelia</taxon>
        <taxon>Dictyosteliales</taxon>
        <taxon>Dictyosteliaceae</taxon>
        <taxon>Dictyostelium</taxon>
    </lineage>
</organism>
<feature type="chain" id="PRO_0000348134" description="Putative uncharacterized protein DDB_G0274405">
    <location>
        <begin position="1"/>
        <end position="377"/>
    </location>
</feature>
<feature type="region of interest" description="Disordered" evidence="1">
    <location>
        <begin position="10"/>
        <end position="79"/>
    </location>
</feature>
<feature type="region of interest" description="Disordered" evidence="1">
    <location>
        <begin position="91"/>
        <end position="141"/>
    </location>
</feature>
<feature type="region of interest" description="Disordered" evidence="1">
    <location>
        <begin position="182"/>
        <end position="257"/>
    </location>
</feature>
<feature type="region of interest" description="Disordered" evidence="1">
    <location>
        <begin position="265"/>
        <end position="284"/>
    </location>
</feature>
<feature type="region of interest" description="Disordered" evidence="1">
    <location>
        <begin position="289"/>
        <end position="326"/>
    </location>
</feature>
<feature type="compositionally biased region" description="Low complexity" evidence="1">
    <location>
        <begin position="14"/>
        <end position="24"/>
    </location>
</feature>
<feature type="compositionally biased region" description="Low complexity" evidence="1">
    <location>
        <begin position="46"/>
        <end position="79"/>
    </location>
</feature>
<feature type="compositionally biased region" description="Low complexity" evidence="1">
    <location>
        <begin position="93"/>
        <end position="124"/>
    </location>
</feature>
<feature type="compositionally biased region" description="Basic and acidic residues" evidence="1">
    <location>
        <begin position="182"/>
        <end position="196"/>
    </location>
</feature>
<feature type="compositionally biased region" description="Basic and acidic residues" evidence="1">
    <location>
        <begin position="209"/>
        <end position="218"/>
    </location>
</feature>
<feature type="compositionally biased region" description="Low complexity" evidence="1">
    <location>
        <begin position="221"/>
        <end position="257"/>
    </location>
</feature>
<feature type="compositionally biased region" description="Basic and acidic residues" evidence="1">
    <location>
        <begin position="265"/>
        <end position="274"/>
    </location>
</feature>
<feature type="compositionally biased region" description="Basic and acidic residues" evidence="1">
    <location>
        <begin position="292"/>
        <end position="303"/>
    </location>
</feature>
<feature type="compositionally biased region" description="Basic residues" evidence="1">
    <location>
        <begin position="311"/>
        <end position="320"/>
    </location>
</feature>
<proteinExistence type="predicted"/>
<name>Y7609_DICDI</name>
<reference key="1">
    <citation type="journal article" date="2002" name="Nature">
        <title>Sequence and analysis of chromosome 2 of Dictyostelium discoideum.</title>
        <authorList>
            <person name="Gloeckner G."/>
            <person name="Eichinger L."/>
            <person name="Szafranski K."/>
            <person name="Pachebat J.A."/>
            <person name="Bankier A.T."/>
            <person name="Dear P.H."/>
            <person name="Lehmann R."/>
            <person name="Baumgart C."/>
            <person name="Parra G."/>
            <person name="Abril J.F."/>
            <person name="Guigo R."/>
            <person name="Kumpf K."/>
            <person name="Tunggal B."/>
            <person name="Cox E.C."/>
            <person name="Quail M.A."/>
            <person name="Platzer M."/>
            <person name="Rosenthal A."/>
            <person name="Noegel A.A."/>
        </authorList>
    </citation>
    <scope>NUCLEOTIDE SEQUENCE [LARGE SCALE GENOMIC DNA]</scope>
    <source>
        <strain>AX4</strain>
    </source>
</reference>
<reference key="2">
    <citation type="journal article" date="2005" name="Nature">
        <title>The genome of the social amoeba Dictyostelium discoideum.</title>
        <authorList>
            <person name="Eichinger L."/>
            <person name="Pachebat J.A."/>
            <person name="Gloeckner G."/>
            <person name="Rajandream M.A."/>
            <person name="Sucgang R."/>
            <person name="Berriman M."/>
            <person name="Song J."/>
            <person name="Olsen R."/>
            <person name="Szafranski K."/>
            <person name="Xu Q."/>
            <person name="Tunggal B."/>
            <person name="Kummerfeld S."/>
            <person name="Madera M."/>
            <person name="Konfortov B.A."/>
            <person name="Rivero F."/>
            <person name="Bankier A.T."/>
            <person name="Lehmann R."/>
            <person name="Hamlin N."/>
            <person name="Davies R."/>
            <person name="Gaudet P."/>
            <person name="Fey P."/>
            <person name="Pilcher K."/>
            <person name="Chen G."/>
            <person name="Saunders D."/>
            <person name="Sodergren E.J."/>
            <person name="Davis P."/>
            <person name="Kerhornou A."/>
            <person name="Nie X."/>
            <person name="Hall N."/>
            <person name="Anjard C."/>
            <person name="Hemphill L."/>
            <person name="Bason N."/>
            <person name="Farbrother P."/>
            <person name="Desany B."/>
            <person name="Just E."/>
            <person name="Morio T."/>
            <person name="Rost R."/>
            <person name="Churcher C.M."/>
            <person name="Cooper J."/>
            <person name="Haydock S."/>
            <person name="van Driessche N."/>
            <person name="Cronin A."/>
            <person name="Goodhead I."/>
            <person name="Muzny D.M."/>
            <person name="Mourier T."/>
            <person name="Pain A."/>
            <person name="Lu M."/>
            <person name="Harper D."/>
            <person name="Lindsay R."/>
            <person name="Hauser H."/>
            <person name="James K.D."/>
            <person name="Quiles M."/>
            <person name="Madan Babu M."/>
            <person name="Saito T."/>
            <person name="Buchrieser C."/>
            <person name="Wardroper A."/>
            <person name="Felder M."/>
            <person name="Thangavelu M."/>
            <person name="Johnson D."/>
            <person name="Knights A."/>
            <person name="Loulseged H."/>
            <person name="Mungall K.L."/>
            <person name="Oliver K."/>
            <person name="Price C."/>
            <person name="Quail M.A."/>
            <person name="Urushihara H."/>
            <person name="Hernandez J."/>
            <person name="Rabbinowitsch E."/>
            <person name="Steffen D."/>
            <person name="Sanders M."/>
            <person name="Ma J."/>
            <person name="Kohara Y."/>
            <person name="Sharp S."/>
            <person name="Simmonds M.N."/>
            <person name="Spiegler S."/>
            <person name="Tivey A."/>
            <person name="Sugano S."/>
            <person name="White B."/>
            <person name="Walker D."/>
            <person name="Woodward J.R."/>
            <person name="Winckler T."/>
            <person name="Tanaka Y."/>
            <person name="Shaulsky G."/>
            <person name="Schleicher M."/>
            <person name="Weinstock G.M."/>
            <person name="Rosenthal A."/>
            <person name="Cox E.C."/>
            <person name="Chisholm R.L."/>
            <person name="Gibbs R.A."/>
            <person name="Loomis W.F."/>
            <person name="Platzer M."/>
            <person name="Kay R.R."/>
            <person name="Williams J.G."/>
            <person name="Dear P.H."/>
            <person name="Noegel A.A."/>
            <person name="Barrell B.G."/>
            <person name="Kuspa A."/>
        </authorList>
    </citation>
    <scope>NUCLEOTIDE SEQUENCE [LARGE SCALE GENOMIC DNA]</scope>
    <source>
        <strain>AX4</strain>
    </source>
</reference>
<accession>Q86KA2</accession>
<accession>Q554V0</accession>
<accession>Q554V1</accession>
<accession>Q86KA3</accession>